<comment type="catalytic activity">
    <reaction>
        <text>beta-D-fructose 1,6-bisphosphate + H2O = beta-D-fructose 6-phosphate + phosphate</text>
        <dbReference type="Rhea" id="RHEA:11064"/>
        <dbReference type="ChEBI" id="CHEBI:15377"/>
        <dbReference type="ChEBI" id="CHEBI:32966"/>
        <dbReference type="ChEBI" id="CHEBI:43474"/>
        <dbReference type="ChEBI" id="CHEBI:57634"/>
        <dbReference type="EC" id="3.1.3.11"/>
    </reaction>
</comment>
<comment type="cofactor">
    <cofactor evidence="1">
        <name>Mg(2+)</name>
        <dbReference type="ChEBI" id="CHEBI:18420"/>
    </cofactor>
    <text evidence="1">Binds 3 Mg(2+) ions per subunit.</text>
</comment>
<comment type="subcellular location">
    <subcellularLocation>
        <location>Cytoplasm</location>
    </subcellularLocation>
</comment>
<comment type="miscellaneous">
    <text>In plants there are two FBPase isozymes: one in the cytosol and the other in the chloroplast.</text>
</comment>
<comment type="similarity">
    <text evidence="2">Belongs to the FBPase class 1 family.</text>
</comment>
<proteinExistence type="evidence at protein level"/>
<protein>
    <recommendedName>
        <fullName>Fructose-1,6-bisphosphatase, cytosolic</fullName>
        <shortName>FBPase</shortName>
        <ecNumber>3.1.3.11</ecNumber>
    </recommendedName>
    <alternativeName>
        <fullName>D-fructose-1,6-bisphosphate 1-phosphohydrolase</fullName>
    </alternativeName>
</protein>
<name>F16P2_SPIOL</name>
<dbReference type="EC" id="3.1.3.11"/>
<dbReference type="EMBL" id="X61690">
    <property type="protein sequence ID" value="CAA43860.1"/>
    <property type="molecule type" value="mRNA"/>
</dbReference>
<dbReference type="PIR" id="S20852">
    <property type="entry name" value="PASPY"/>
</dbReference>
<dbReference type="RefSeq" id="NP_001413379.1">
    <property type="nucleotide sequence ID" value="NM_001426450.1"/>
</dbReference>
<dbReference type="RefSeq" id="XP_021857795.1">
    <property type="nucleotide sequence ID" value="XM_022002103.2"/>
</dbReference>
<dbReference type="SMR" id="P14766"/>
<dbReference type="GeneID" id="110797013"/>
<dbReference type="OrthoDB" id="10256725at2759"/>
<dbReference type="SABIO-RK" id="P14766"/>
<dbReference type="Proteomes" id="UP001155700">
    <property type="component" value="Unplaced"/>
</dbReference>
<dbReference type="GO" id="GO:0005737">
    <property type="term" value="C:cytoplasm"/>
    <property type="evidence" value="ECO:0000318"/>
    <property type="project" value="GO_Central"/>
</dbReference>
<dbReference type="GO" id="GO:0005829">
    <property type="term" value="C:cytosol"/>
    <property type="evidence" value="ECO:0000318"/>
    <property type="project" value="GO_Central"/>
</dbReference>
<dbReference type="GO" id="GO:0042132">
    <property type="term" value="F:fructose 1,6-bisphosphate 1-phosphatase activity"/>
    <property type="evidence" value="ECO:0000318"/>
    <property type="project" value="GO_Central"/>
</dbReference>
<dbReference type="GO" id="GO:0046872">
    <property type="term" value="F:metal ion binding"/>
    <property type="evidence" value="ECO:0007669"/>
    <property type="project" value="UniProtKB-KW"/>
</dbReference>
<dbReference type="GO" id="GO:0030388">
    <property type="term" value="P:fructose 1,6-bisphosphate metabolic process"/>
    <property type="evidence" value="ECO:0000318"/>
    <property type="project" value="GO_Central"/>
</dbReference>
<dbReference type="GO" id="GO:0006002">
    <property type="term" value="P:fructose 6-phosphate metabolic process"/>
    <property type="evidence" value="ECO:0000318"/>
    <property type="project" value="GO_Central"/>
</dbReference>
<dbReference type="GO" id="GO:0006000">
    <property type="term" value="P:fructose metabolic process"/>
    <property type="evidence" value="ECO:0000318"/>
    <property type="project" value="GO_Central"/>
</dbReference>
<dbReference type="GO" id="GO:0006094">
    <property type="term" value="P:gluconeogenesis"/>
    <property type="evidence" value="ECO:0000318"/>
    <property type="project" value="GO_Central"/>
</dbReference>
<dbReference type="GO" id="GO:0005986">
    <property type="term" value="P:sucrose biosynthetic process"/>
    <property type="evidence" value="ECO:0007669"/>
    <property type="project" value="TreeGrafter"/>
</dbReference>
<dbReference type="CDD" id="cd00354">
    <property type="entry name" value="FBPase"/>
    <property type="match status" value="1"/>
</dbReference>
<dbReference type="FunFam" id="3.40.190.80:FF:000001">
    <property type="entry name" value="Fructose-1,6-bisphosphatase class 1"/>
    <property type="match status" value="1"/>
</dbReference>
<dbReference type="FunFam" id="3.30.540.10:FF:000008">
    <property type="entry name" value="Fructose-1,6-bisphosphatase, cytosolic"/>
    <property type="match status" value="1"/>
</dbReference>
<dbReference type="Gene3D" id="3.40.190.80">
    <property type="match status" value="1"/>
</dbReference>
<dbReference type="Gene3D" id="3.30.540.10">
    <property type="entry name" value="Fructose-1,6-Bisphosphatase, subunit A, domain 1"/>
    <property type="match status" value="1"/>
</dbReference>
<dbReference type="HAMAP" id="MF_01855">
    <property type="entry name" value="FBPase_class1"/>
    <property type="match status" value="1"/>
</dbReference>
<dbReference type="InterPro" id="IPR044015">
    <property type="entry name" value="FBPase_C_dom"/>
</dbReference>
<dbReference type="InterPro" id="IPR000146">
    <property type="entry name" value="FBPase_class-1"/>
</dbReference>
<dbReference type="InterPro" id="IPR033391">
    <property type="entry name" value="FBPase_N"/>
</dbReference>
<dbReference type="InterPro" id="IPR028343">
    <property type="entry name" value="FBPtase"/>
</dbReference>
<dbReference type="InterPro" id="IPR020548">
    <property type="entry name" value="Fructose_bisphosphatase_AS"/>
</dbReference>
<dbReference type="NCBIfam" id="NF006778">
    <property type="entry name" value="PRK09293.1-1"/>
    <property type="match status" value="1"/>
</dbReference>
<dbReference type="NCBIfam" id="NF006779">
    <property type="entry name" value="PRK09293.1-3"/>
    <property type="match status" value="1"/>
</dbReference>
<dbReference type="PANTHER" id="PTHR11556:SF41">
    <property type="entry name" value="FRUCTOSE-1,6-BISPHOSPHATASE, CYTOSOLIC"/>
    <property type="match status" value="1"/>
</dbReference>
<dbReference type="PANTHER" id="PTHR11556">
    <property type="entry name" value="FRUCTOSE-1,6-BISPHOSPHATASE-RELATED"/>
    <property type="match status" value="1"/>
</dbReference>
<dbReference type="Pfam" id="PF00316">
    <property type="entry name" value="FBPase"/>
    <property type="match status" value="1"/>
</dbReference>
<dbReference type="Pfam" id="PF18913">
    <property type="entry name" value="FBPase_C"/>
    <property type="match status" value="1"/>
</dbReference>
<dbReference type="PIRSF" id="PIRSF500210">
    <property type="entry name" value="FBPtase"/>
    <property type="match status" value="1"/>
</dbReference>
<dbReference type="PIRSF" id="PIRSF000904">
    <property type="entry name" value="FBPtase_SBPase"/>
    <property type="match status" value="1"/>
</dbReference>
<dbReference type="PRINTS" id="PR00115">
    <property type="entry name" value="F16BPHPHTASE"/>
</dbReference>
<dbReference type="SUPFAM" id="SSF56655">
    <property type="entry name" value="Carbohydrate phosphatase"/>
    <property type="match status" value="1"/>
</dbReference>
<dbReference type="PROSITE" id="PS00124">
    <property type="entry name" value="FBPASE"/>
    <property type="match status" value="1"/>
</dbReference>
<sequence length="341" mass="37199">MDHAGDAMRTDLMTITRYVLNEQSKRPESRGDFTILLSHIVLGCKFVCSAVNKAGLAKLIGLAGETNIQGEEQKKLDVLSNEVFVKALTSSGRTCILVSEEDEEATFIEPSLRGKYCVVFDPLDGSSNIDCGVSIGTIFGIYMVKDFETATLEDVLQPGKNMVAAGYCMYGSSCTLVLSTGSGVNGFTLDPSLGEYILTHPDIKIPNKGKIYSVNEGNAKNWDGPTTKYVEKCKFPTDGSSPKSLRYIGSMVADVHRTLLYGGIFLYPGDKKSPNGKLRVLYEVFPMSFLMEQAGGQAFTGKQRALDLIPTKIHERSPVFLGSYDDVEDIKALYAAQEKTA</sequence>
<feature type="chain" id="PRO_0000200521" description="Fructose-1,6-bisphosphatase, cytosolic">
    <location>
        <begin position="1"/>
        <end position="341"/>
    </location>
</feature>
<feature type="binding site" evidence="1">
    <location>
        <position position="71"/>
    </location>
    <ligand>
        <name>Mg(2+)</name>
        <dbReference type="ChEBI" id="CHEBI:18420"/>
        <label>1</label>
    </ligand>
</feature>
<feature type="binding site" evidence="1">
    <location>
        <position position="100"/>
    </location>
    <ligand>
        <name>Mg(2+)</name>
        <dbReference type="ChEBI" id="CHEBI:18420"/>
        <label>1</label>
    </ligand>
</feature>
<feature type="binding site" evidence="1">
    <location>
        <position position="100"/>
    </location>
    <ligand>
        <name>Mg(2+)</name>
        <dbReference type="ChEBI" id="CHEBI:18420"/>
        <label>2</label>
    </ligand>
</feature>
<feature type="binding site" evidence="1">
    <location>
        <position position="121"/>
    </location>
    <ligand>
        <name>Mg(2+)</name>
        <dbReference type="ChEBI" id="CHEBI:18420"/>
        <label>2</label>
    </ligand>
</feature>
<feature type="binding site" evidence="1">
    <location>
        <position position="121"/>
    </location>
    <ligand>
        <name>Mg(2+)</name>
        <dbReference type="ChEBI" id="CHEBI:18420"/>
        <label>3</label>
    </ligand>
</feature>
<feature type="binding site" evidence="1">
    <location>
        <position position="123"/>
    </location>
    <ligand>
        <name>Mg(2+)</name>
        <dbReference type="ChEBI" id="CHEBI:18420"/>
        <label>2</label>
    </ligand>
</feature>
<feature type="binding site" evidence="1">
    <location>
        <begin position="124"/>
        <end position="127"/>
    </location>
    <ligand>
        <name>substrate</name>
    </ligand>
</feature>
<feature type="binding site" evidence="1">
    <location>
        <position position="124"/>
    </location>
    <ligand>
        <name>Mg(2+)</name>
        <dbReference type="ChEBI" id="CHEBI:18420"/>
        <label>3</label>
    </ligand>
</feature>
<feature type="binding site" evidence="1">
    <location>
        <position position="215"/>
    </location>
    <ligand>
        <name>substrate</name>
    </ligand>
</feature>
<feature type="binding site" evidence="1">
    <location>
        <position position="247"/>
    </location>
    <ligand>
        <name>substrate</name>
    </ligand>
</feature>
<feature type="binding site" evidence="1">
    <location>
        <position position="267"/>
    </location>
    <ligand>
        <name>substrate</name>
    </ligand>
</feature>
<feature type="binding site" evidence="1">
    <location>
        <position position="277"/>
    </location>
    <ligand>
        <name>substrate</name>
    </ligand>
</feature>
<feature type="binding site" evidence="1">
    <location>
        <position position="283"/>
    </location>
    <ligand>
        <name>Mg(2+)</name>
        <dbReference type="ChEBI" id="CHEBI:18420"/>
        <label>3</label>
    </ligand>
</feature>
<feature type="sequence conflict" description="In Ref. 2; AA sequence." evidence="2" ref="2">
    <original>L</original>
    <variation>F</variation>
    <location>
        <position position="123"/>
    </location>
</feature>
<feature type="sequence conflict" description="In Ref. 2; AA sequence." evidence="2" ref="2">
    <original>V</original>
    <variation>Y</variation>
    <location>
        <position position="177"/>
    </location>
</feature>
<feature type="sequence conflict" description="In Ref. 2; AA sequence." evidence="2" ref="2">
    <location>
        <begin position="181"/>
        <end position="190"/>
    </location>
</feature>
<accession>P14766</accession>
<keyword id="KW-0119">Carbohydrate metabolism</keyword>
<keyword id="KW-0963">Cytoplasm</keyword>
<keyword id="KW-0903">Direct protein sequencing</keyword>
<keyword id="KW-0378">Hydrolase</keyword>
<keyword id="KW-0460">Magnesium</keyword>
<keyword id="KW-0479">Metal-binding</keyword>
<keyword id="KW-1185">Reference proteome</keyword>
<organism>
    <name type="scientific">Spinacia oleracea</name>
    <name type="common">Spinach</name>
    <dbReference type="NCBI Taxonomy" id="3562"/>
    <lineage>
        <taxon>Eukaryota</taxon>
        <taxon>Viridiplantae</taxon>
        <taxon>Streptophyta</taxon>
        <taxon>Embryophyta</taxon>
        <taxon>Tracheophyta</taxon>
        <taxon>Spermatophyta</taxon>
        <taxon>Magnoliopsida</taxon>
        <taxon>eudicotyledons</taxon>
        <taxon>Gunneridae</taxon>
        <taxon>Pentapetalae</taxon>
        <taxon>Caryophyllales</taxon>
        <taxon>Chenopodiaceae</taxon>
        <taxon>Chenopodioideae</taxon>
        <taxon>Anserineae</taxon>
        <taxon>Spinacia</taxon>
    </lineage>
</organism>
<evidence type="ECO:0000250" key="1"/>
<evidence type="ECO:0000305" key="2"/>
<reference key="1">
    <citation type="journal article" date="1992" name="Plant Mol. Biol.">
        <title>Isolation and characterization of a cDNA encoding cytosolic fructose-1,6-bisphosphatase from spinach.</title>
        <authorList>
            <person name="Hur Y."/>
            <person name="Unger E.A."/>
            <person name="Vasconcelos A.C."/>
        </authorList>
    </citation>
    <scope>NUCLEOTIDE SEQUENCE [MRNA]</scope>
    <source>
        <tissue>Leaf</tissue>
    </source>
</reference>
<reference key="2">
    <citation type="journal article" date="1990" name="Eur. J. Biochem.">
        <title>Spinach cytosolic fructose-1,6-bisphosphatase. Purification, enzyme properties and structural comparisons.</title>
        <authorList>
            <person name="Ladror U.S."/>
            <person name="Latshaw S.P."/>
            <person name="Marcus F."/>
        </authorList>
    </citation>
    <scope>PROTEIN SEQUENCE OF 10-341</scope>
    <source>
        <tissue>Leaf</tissue>
    </source>
</reference>